<sequence length="162" mass="17328">MALNLQDKKAIVAEVNEAASGALSAVVADSRGVQVAAMTNLRKQAREAGVYLKVVRNTLARRAVEGTAYECLKDVFVGPTLIGFSNEHPGAAARLFKDFAKENKAFEIKAAAFEGVLTDPEVLATLPTYDEAIARLMMCMKEASAGKLVRTIAAVRDQKEAA</sequence>
<keyword id="KW-0687">Ribonucleoprotein</keyword>
<keyword id="KW-0689">Ribosomal protein</keyword>
<keyword id="KW-0694">RNA-binding</keyword>
<keyword id="KW-0699">rRNA-binding</keyword>
<proteinExistence type="inferred from homology"/>
<dbReference type="EMBL" id="CP000627">
    <property type="protein sequence ID" value="ABQ21111.1"/>
    <property type="molecule type" value="Genomic_DNA"/>
</dbReference>
<dbReference type="EMBL" id="CP001235">
    <property type="protein sequence ID" value="ACP08392.1"/>
    <property type="molecule type" value="Genomic_DNA"/>
</dbReference>
<dbReference type="RefSeq" id="WP_001207198.1">
    <property type="nucleotide sequence ID" value="NZ_JAACZH010000036.1"/>
</dbReference>
<dbReference type="GeneID" id="94014902"/>
<dbReference type="KEGG" id="vco:VC0395_A2728"/>
<dbReference type="KEGG" id="vcr:VC395_0369"/>
<dbReference type="PATRIC" id="fig|345073.21.peg.357"/>
<dbReference type="eggNOG" id="COG0244">
    <property type="taxonomic scope" value="Bacteria"/>
</dbReference>
<dbReference type="HOGENOM" id="CLU_092227_0_2_6"/>
<dbReference type="OrthoDB" id="9808307at2"/>
<dbReference type="Proteomes" id="UP000000249">
    <property type="component" value="Chromosome 2"/>
</dbReference>
<dbReference type="GO" id="GO:0015934">
    <property type="term" value="C:large ribosomal subunit"/>
    <property type="evidence" value="ECO:0007669"/>
    <property type="project" value="InterPro"/>
</dbReference>
<dbReference type="GO" id="GO:0070180">
    <property type="term" value="F:large ribosomal subunit rRNA binding"/>
    <property type="evidence" value="ECO:0007669"/>
    <property type="project" value="UniProtKB-UniRule"/>
</dbReference>
<dbReference type="GO" id="GO:0003735">
    <property type="term" value="F:structural constituent of ribosome"/>
    <property type="evidence" value="ECO:0007669"/>
    <property type="project" value="InterPro"/>
</dbReference>
<dbReference type="GO" id="GO:0006412">
    <property type="term" value="P:translation"/>
    <property type="evidence" value="ECO:0007669"/>
    <property type="project" value="UniProtKB-UniRule"/>
</dbReference>
<dbReference type="CDD" id="cd05797">
    <property type="entry name" value="Ribosomal_L10"/>
    <property type="match status" value="1"/>
</dbReference>
<dbReference type="FunFam" id="3.30.70.1730:FF:000001">
    <property type="entry name" value="50S ribosomal protein L10"/>
    <property type="match status" value="1"/>
</dbReference>
<dbReference type="Gene3D" id="3.30.70.1730">
    <property type="match status" value="1"/>
</dbReference>
<dbReference type="Gene3D" id="6.10.250.2350">
    <property type="match status" value="1"/>
</dbReference>
<dbReference type="HAMAP" id="MF_00362">
    <property type="entry name" value="Ribosomal_uL10"/>
    <property type="match status" value="1"/>
</dbReference>
<dbReference type="InterPro" id="IPR001790">
    <property type="entry name" value="Ribosomal_uL10"/>
</dbReference>
<dbReference type="InterPro" id="IPR043141">
    <property type="entry name" value="Ribosomal_uL10-like_sf"/>
</dbReference>
<dbReference type="InterPro" id="IPR022973">
    <property type="entry name" value="Ribosomal_uL10_bac"/>
</dbReference>
<dbReference type="InterPro" id="IPR047865">
    <property type="entry name" value="Ribosomal_uL10_bac_type"/>
</dbReference>
<dbReference type="InterPro" id="IPR002363">
    <property type="entry name" value="Ribosomal_uL10_CS_bac"/>
</dbReference>
<dbReference type="NCBIfam" id="NF000955">
    <property type="entry name" value="PRK00099.1-1"/>
    <property type="match status" value="1"/>
</dbReference>
<dbReference type="PANTHER" id="PTHR11560">
    <property type="entry name" value="39S RIBOSOMAL PROTEIN L10, MITOCHONDRIAL"/>
    <property type="match status" value="1"/>
</dbReference>
<dbReference type="Pfam" id="PF00466">
    <property type="entry name" value="Ribosomal_L10"/>
    <property type="match status" value="1"/>
</dbReference>
<dbReference type="SUPFAM" id="SSF160369">
    <property type="entry name" value="Ribosomal protein L10-like"/>
    <property type="match status" value="1"/>
</dbReference>
<dbReference type="PROSITE" id="PS01109">
    <property type="entry name" value="RIBOSOMAL_L10"/>
    <property type="match status" value="1"/>
</dbReference>
<comment type="function">
    <text evidence="1">Forms part of the ribosomal stalk, playing a central role in the interaction of the ribosome with GTP-bound translation factors.</text>
</comment>
<comment type="subunit">
    <text evidence="1">Part of the ribosomal stalk of the 50S ribosomal subunit. The N-terminus interacts with L11 and the large rRNA to form the base of the stalk. The C-terminus forms an elongated spine to which L12 dimers bind in a sequential fashion forming a multimeric L10(L12)X complex.</text>
</comment>
<comment type="similarity">
    <text evidence="1">Belongs to the universal ribosomal protein uL10 family.</text>
</comment>
<reference key="1">
    <citation type="submission" date="2007-03" db="EMBL/GenBank/DDBJ databases">
        <authorList>
            <person name="Heidelberg J."/>
        </authorList>
    </citation>
    <scope>NUCLEOTIDE SEQUENCE [LARGE SCALE GENOMIC DNA]</scope>
    <source>
        <strain>ATCC 39541 / Classical Ogawa 395 / O395</strain>
    </source>
</reference>
<reference key="2">
    <citation type="journal article" date="2008" name="PLoS ONE">
        <title>A recalibrated molecular clock and independent origins for the cholera pandemic clones.</title>
        <authorList>
            <person name="Feng L."/>
            <person name="Reeves P.R."/>
            <person name="Lan R."/>
            <person name="Ren Y."/>
            <person name="Gao C."/>
            <person name="Zhou Z."/>
            <person name="Ren Y."/>
            <person name="Cheng J."/>
            <person name="Wang W."/>
            <person name="Wang J."/>
            <person name="Qian W."/>
            <person name="Li D."/>
            <person name="Wang L."/>
        </authorList>
    </citation>
    <scope>NUCLEOTIDE SEQUENCE [LARGE SCALE GENOMIC DNA]</scope>
    <source>
        <strain>ATCC 39541 / Classical Ogawa 395 / O395</strain>
    </source>
</reference>
<feature type="chain" id="PRO_1000072093" description="Large ribosomal subunit protein uL10">
    <location>
        <begin position="1"/>
        <end position="162"/>
    </location>
</feature>
<name>RL10_VIBC3</name>
<evidence type="ECO:0000255" key="1">
    <source>
        <dbReference type="HAMAP-Rule" id="MF_00362"/>
    </source>
</evidence>
<evidence type="ECO:0000305" key="2"/>
<organism>
    <name type="scientific">Vibrio cholerae serotype O1 (strain ATCC 39541 / Classical Ogawa 395 / O395)</name>
    <dbReference type="NCBI Taxonomy" id="345073"/>
    <lineage>
        <taxon>Bacteria</taxon>
        <taxon>Pseudomonadati</taxon>
        <taxon>Pseudomonadota</taxon>
        <taxon>Gammaproteobacteria</taxon>
        <taxon>Vibrionales</taxon>
        <taxon>Vibrionaceae</taxon>
        <taxon>Vibrio</taxon>
    </lineage>
</organism>
<accession>A5F3P3</accession>
<accession>C3M3Y4</accession>
<gene>
    <name evidence="1" type="primary">rplJ</name>
    <name type="ordered locus">VC0395_A2728</name>
    <name type="ordered locus">VC395_0369</name>
</gene>
<protein>
    <recommendedName>
        <fullName evidence="1">Large ribosomal subunit protein uL10</fullName>
    </recommendedName>
    <alternativeName>
        <fullName evidence="2">50S ribosomal protein L10</fullName>
    </alternativeName>
</protein>